<keyword id="KW-0067">ATP-binding</keyword>
<keyword id="KW-0997">Cell inner membrane</keyword>
<keyword id="KW-1003">Cell membrane</keyword>
<keyword id="KW-0418">Kinase</keyword>
<keyword id="KW-0472">Membrane</keyword>
<keyword id="KW-0547">Nucleotide-binding</keyword>
<keyword id="KW-0808">Transferase</keyword>
<keyword id="KW-0812">Transmembrane</keyword>
<keyword id="KW-1133">Transmembrane helix</keyword>
<keyword id="KW-0831">Ubiquinone biosynthesis</keyword>
<protein>
    <recommendedName>
        <fullName evidence="1">Probable protein kinase UbiB</fullName>
        <ecNumber evidence="1">2.7.-.-</ecNumber>
    </recommendedName>
    <alternativeName>
        <fullName evidence="1">Ubiquinone biosynthesis protein UbiB</fullName>
    </alternativeName>
</protein>
<feature type="chain" id="PRO_1000134822" description="Probable protein kinase UbiB">
    <location>
        <begin position="1"/>
        <end position="544"/>
    </location>
</feature>
<feature type="transmembrane region" description="Helical" evidence="1">
    <location>
        <begin position="500"/>
        <end position="520"/>
    </location>
</feature>
<feature type="domain" description="Protein kinase" evidence="1">
    <location>
        <begin position="123"/>
        <end position="501"/>
    </location>
</feature>
<feature type="active site" description="Proton acceptor" evidence="1">
    <location>
        <position position="287"/>
    </location>
</feature>
<feature type="binding site" evidence="1">
    <location>
        <begin position="129"/>
        <end position="137"/>
    </location>
    <ligand>
        <name>ATP</name>
        <dbReference type="ChEBI" id="CHEBI:30616"/>
    </ligand>
</feature>
<feature type="binding site" evidence="1">
    <location>
        <position position="152"/>
    </location>
    <ligand>
        <name>ATP</name>
        <dbReference type="ChEBI" id="CHEBI:30616"/>
    </ligand>
</feature>
<dbReference type="EC" id="2.7.-.-" evidence="1"/>
<dbReference type="EMBL" id="FM954972">
    <property type="protein sequence ID" value="CAV17135.1"/>
    <property type="molecule type" value="Genomic_DNA"/>
</dbReference>
<dbReference type="SMR" id="B7VHC3"/>
<dbReference type="STRING" id="575788.VS_0100"/>
<dbReference type="KEGG" id="vsp:VS_0100"/>
<dbReference type="PATRIC" id="fig|575788.5.peg.1493"/>
<dbReference type="eggNOG" id="COG0661">
    <property type="taxonomic scope" value="Bacteria"/>
</dbReference>
<dbReference type="HOGENOM" id="CLU_006533_0_0_6"/>
<dbReference type="UniPathway" id="UPA00232"/>
<dbReference type="Proteomes" id="UP000009100">
    <property type="component" value="Chromosome 1"/>
</dbReference>
<dbReference type="GO" id="GO:0005886">
    <property type="term" value="C:plasma membrane"/>
    <property type="evidence" value="ECO:0007669"/>
    <property type="project" value="UniProtKB-SubCell"/>
</dbReference>
<dbReference type="GO" id="GO:0005524">
    <property type="term" value="F:ATP binding"/>
    <property type="evidence" value="ECO:0007669"/>
    <property type="project" value="UniProtKB-KW"/>
</dbReference>
<dbReference type="GO" id="GO:0004672">
    <property type="term" value="F:protein kinase activity"/>
    <property type="evidence" value="ECO:0007669"/>
    <property type="project" value="UniProtKB-UniRule"/>
</dbReference>
<dbReference type="GO" id="GO:0010795">
    <property type="term" value="P:regulation of ubiquinone biosynthetic process"/>
    <property type="evidence" value="ECO:0007669"/>
    <property type="project" value="UniProtKB-UniRule"/>
</dbReference>
<dbReference type="GO" id="GO:0006744">
    <property type="term" value="P:ubiquinone biosynthetic process"/>
    <property type="evidence" value="ECO:0007669"/>
    <property type="project" value="UniProtKB-UniPathway"/>
</dbReference>
<dbReference type="CDD" id="cd13972">
    <property type="entry name" value="UbiB"/>
    <property type="match status" value="1"/>
</dbReference>
<dbReference type="HAMAP" id="MF_00414">
    <property type="entry name" value="UbiB"/>
    <property type="match status" value="1"/>
</dbReference>
<dbReference type="InterPro" id="IPR004147">
    <property type="entry name" value="ABC1_dom"/>
</dbReference>
<dbReference type="InterPro" id="IPR011009">
    <property type="entry name" value="Kinase-like_dom_sf"/>
</dbReference>
<dbReference type="InterPro" id="IPR010232">
    <property type="entry name" value="UbiB"/>
</dbReference>
<dbReference type="InterPro" id="IPR045308">
    <property type="entry name" value="UbiB_bact"/>
</dbReference>
<dbReference type="InterPro" id="IPR050154">
    <property type="entry name" value="UbiB_kinase"/>
</dbReference>
<dbReference type="NCBIfam" id="NF003404">
    <property type="entry name" value="PRK04750.1"/>
    <property type="match status" value="1"/>
</dbReference>
<dbReference type="NCBIfam" id="TIGR01982">
    <property type="entry name" value="UbiB"/>
    <property type="match status" value="1"/>
</dbReference>
<dbReference type="PANTHER" id="PTHR10566">
    <property type="entry name" value="CHAPERONE-ACTIVITY OF BC1 COMPLEX CABC1 -RELATED"/>
    <property type="match status" value="1"/>
</dbReference>
<dbReference type="PANTHER" id="PTHR10566:SF113">
    <property type="entry name" value="PROTEIN ACTIVITY OF BC1 COMPLEX KINASE 7, CHLOROPLASTIC"/>
    <property type="match status" value="1"/>
</dbReference>
<dbReference type="Pfam" id="PF03109">
    <property type="entry name" value="ABC1"/>
    <property type="match status" value="1"/>
</dbReference>
<dbReference type="SUPFAM" id="SSF56112">
    <property type="entry name" value="Protein kinase-like (PK-like)"/>
    <property type="match status" value="1"/>
</dbReference>
<organism>
    <name type="scientific">Vibrio atlanticus (strain LGP32)</name>
    <name type="common">Vibrio splendidus (strain Mel32)</name>
    <dbReference type="NCBI Taxonomy" id="575788"/>
    <lineage>
        <taxon>Bacteria</taxon>
        <taxon>Pseudomonadati</taxon>
        <taxon>Pseudomonadota</taxon>
        <taxon>Gammaproteobacteria</taxon>
        <taxon>Vibrionales</taxon>
        <taxon>Vibrionaceae</taxon>
        <taxon>Vibrio</taxon>
    </lineage>
</organism>
<accession>B7VHC3</accession>
<sequence length="544" mass="62405">MTPAELKRLYHIIKVQLEYGLDELMPEHQLTKAPLLARKSLFWLKNKHQDKELGHRLRLALQELGPVWIKFGQMMSTRRDLFPPHIADQLALLQDQVAPFDGQLAKRDMEKALGGRLDNWFTDFDIEPLASASIAQVHTAKLKESGREIVLKVIRPDIRPVIDADLKLMHRMARIVAKSLPEARRLKPVEVVHEYEKTLLDELDLRREAANAIQLRRNFEGSEELYVPEVIPDLSSETLMVSERIYGIQVSDIETLEANGTNMKLLAERGVTVFFTQVFRDSFFHADMHPGNVFVNPENPDNPQWIGLDCGIVGTLNSEDKRYLAENLLAFFNRDYRKVAELHVDSGWVPHDTNVNDFEFAIRMVCEPIFAKPLGEISFGHVLLNLFNTARRFNMEVQPQLVLLQKTLLYVEGLGRQLYPQLDLWATAKPFLETWMMNQVGPQAVINAVKERAPFWAEKLPELPELLYDSLRQGKAMNHRMDQLYQGYRDSKRQQATGKFLFGVGATLVVCSAILVSSPYEQLSMGCGIAGVTFWLLSWRAYRR</sequence>
<evidence type="ECO:0000255" key="1">
    <source>
        <dbReference type="HAMAP-Rule" id="MF_00414"/>
    </source>
</evidence>
<name>UBIB_VIBA3</name>
<comment type="function">
    <text evidence="1">Is probably a protein kinase regulator of UbiI activity which is involved in aerobic coenzyme Q (ubiquinone) biosynthesis.</text>
</comment>
<comment type="pathway">
    <text>Cofactor biosynthesis; ubiquinone biosynthesis [regulation].</text>
</comment>
<comment type="subcellular location">
    <subcellularLocation>
        <location evidence="1">Cell inner membrane</location>
        <topology evidence="1">Single-pass membrane protein</topology>
    </subcellularLocation>
</comment>
<comment type="similarity">
    <text evidence="1">Belongs to the ABC1 family. UbiB subfamily.</text>
</comment>
<proteinExistence type="inferred from homology"/>
<gene>
    <name evidence="1" type="primary">ubiB</name>
    <name type="ordered locus">VS_0100</name>
</gene>
<reference key="1">
    <citation type="submission" date="2009-02" db="EMBL/GenBank/DDBJ databases">
        <title>Vibrio splendidus str. LGP32 complete genome.</title>
        <authorList>
            <person name="Mazel D."/>
            <person name="Le Roux F."/>
        </authorList>
    </citation>
    <scope>NUCLEOTIDE SEQUENCE [LARGE SCALE GENOMIC DNA]</scope>
    <source>
        <strain>LGP32</strain>
    </source>
</reference>